<evidence type="ECO:0000250" key="1"/>
<evidence type="ECO:0000255" key="2">
    <source>
        <dbReference type="HAMAP-Rule" id="MF_01344"/>
    </source>
</evidence>
<reference key="1">
    <citation type="journal article" date="2003" name="Mol. Biol. Evol.">
        <title>Analysis of the Amborella trichopoda chloroplast genome sequence suggests that Amborella is not a basal angiosperm.</title>
        <authorList>
            <person name="Goremykin V.V."/>
            <person name="Hirsch-Ernst K.I."/>
            <person name="Wolfl S."/>
            <person name="Hellwig F.H."/>
        </authorList>
    </citation>
    <scope>NUCLEOTIDE SEQUENCE [LARGE SCALE GENOMIC DNA]</scope>
</reference>
<organism>
    <name type="scientific">Amborella trichopoda</name>
    <dbReference type="NCBI Taxonomy" id="13333"/>
    <lineage>
        <taxon>Eukaryota</taxon>
        <taxon>Viridiplantae</taxon>
        <taxon>Streptophyta</taxon>
        <taxon>Embryophyta</taxon>
        <taxon>Tracheophyta</taxon>
        <taxon>Spermatophyta</taxon>
        <taxon>Magnoliopsida</taxon>
        <taxon>Amborellales</taxon>
        <taxon>Amborellaceae</taxon>
        <taxon>Amborella</taxon>
    </lineage>
</organism>
<keyword id="KW-0150">Chloroplast</keyword>
<keyword id="KW-0249">Electron transport</keyword>
<keyword id="KW-0472">Membrane</keyword>
<keyword id="KW-0602">Photosynthesis</keyword>
<keyword id="KW-0934">Plastid</keyword>
<keyword id="KW-1185">Reference proteome</keyword>
<keyword id="KW-0793">Thylakoid</keyword>
<keyword id="KW-0812">Transmembrane</keyword>
<keyword id="KW-1133">Transmembrane helix</keyword>
<keyword id="KW-0813">Transport</keyword>
<sequence>MGVTKKPDLNDPVLRAKLAKGMGHNYYGEPAWPNDLLYIFPVVILGTIACNVGLAVLEPSMIGEPADPFATPLEILPEWYFFPVFQILRTVPNKLLGVLLMVSVPTGLLTVPFLENVNKFQNPFRRPVATTVFLFGTALSLWLGIGATLPIDKSLTLGLF</sequence>
<proteinExistence type="inferred from homology"/>
<comment type="function">
    <text evidence="2">Component of the cytochrome b6-f complex, which mediates electron transfer between photosystem II (PSII) and photosystem I (PSI), cyclic electron flow around PSI, and state transitions.</text>
</comment>
<comment type="subunit">
    <text evidence="1">The 4 large subunits of the cytochrome b6-f complex are cytochrome b6, subunit IV (17 kDa polypeptide, petD), cytochrome f and the Rieske protein, while the 4 small subunits are petG, petL, petM and petN. The complex functions as a dimer (By similarity).</text>
</comment>
<comment type="subcellular location">
    <subcellularLocation>
        <location evidence="2">Plastid</location>
        <location evidence="2">Chloroplast thylakoid membrane</location>
        <topology evidence="2">Multi-pass membrane protein</topology>
    </subcellularLocation>
</comment>
<comment type="similarity">
    <text evidence="2">Belongs to the cytochrome b family. PetD subfamily.</text>
</comment>
<dbReference type="EMBL" id="AJ506156">
    <property type="protein sequence ID" value="CAD45137.1"/>
    <property type="molecule type" value="Genomic_DNA"/>
</dbReference>
<dbReference type="RefSeq" id="NP_904129.1">
    <property type="nucleotide sequence ID" value="NC_005086.1"/>
</dbReference>
<dbReference type="SMR" id="Q70XX7"/>
<dbReference type="STRING" id="13333.Q70XX7"/>
<dbReference type="GeneID" id="2546619"/>
<dbReference type="KEGG" id="atr:2546619"/>
<dbReference type="OrthoDB" id="244at2759"/>
<dbReference type="Proteomes" id="UP000017836">
    <property type="component" value="Chloroplast"/>
</dbReference>
<dbReference type="GO" id="GO:0009535">
    <property type="term" value="C:chloroplast thylakoid membrane"/>
    <property type="evidence" value="ECO:0007669"/>
    <property type="project" value="UniProtKB-SubCell"/>
</dbReference>
<dbReference type="GO" id="GO:0045158">
    <property type="term" value="F:electron transporter, transferring electrons within cytochrome b6/f complex of photosystem II activity"/>
    <property type="evidence" value="ECO:0007669"/>
    <property type="project" value="UniProtKB-UniRule"/>
</dbReference>
<dbReference type="GO" id="GO:0045156">
    <property type="term" value="F:electron transporter, transferring electrons within the cyclic electron transport pathway of photosynthesis activity"/>
    <property type="evidence" value="ECO:0007669"/>
    <property type="project" value="InterPro"/>
</dbReference>
<dbReference type="GO" id="GO:0016491">
    <property type="term" value="F:oxidoreductase activity"/>
    <property type="evidence" value="ECO:0007669"/>
    <property type="project" value="InterPro"/>
</dbReference>
<dbReference type="GO" id="GO:0009767">
    <property type="term" value="P:photosynthetic electron transport chain"/>
    <property type="evidence" value="ECO:0007669"/>
    <property type="project" value="InterPro"/>
</dbReference>
<dbReference type="CDD" id="cd00290">
    <property type="entry name" value="cytochrome_b_C"/>
    <property type="match status" value="1"/>
</dbReference>
<dbReference type="FunFam" id="1.10.287.980:FF:000001">
    <property type="entry name" value="Cytochrome b6-f complex subunit 4"/>
    <property type="match status" value="1"/>
</dbReference>
<dbReference type="FunFam" id="1.20.5.510:FF:000002">
    <property type="entry name" value="Cytochrome b6-f complex subunit 4"/>
    <property type="match status" value="1"/>
</dbReference>
<dbReference type="Gene3D" id="1.10.287.980">
    <property type="entry name" value="plastocyanin oxidoreductase"/>
    <property type="match status" value="1"/>
</dbReference>
<dbReference type="Gene3D" id="1.20.5.510">
    <property type="entry name" value="Single helix bin"/>
    <property type="match status" value="1"/>
</dbReference>
<dbReference type="HAMAP" id="MF_01344">
    <property type="entry name" value="Cytb6_f_subIV"/>
    <property type="match status" value="1"/>
</dbReference>
<dbReference type="InterPro" id="IPR005798">
    <property type="entry name" value="Cyt_b/b6_C"/>
</dbReference>
<dbReference type="InterPro" id="IPR036150">
    <property type="entry name" value="Cyt_b/b6_C_sf"/>
</dbReference>
<dbReference type="InterPro" id="IPR005870">
    <property type="entry name" value="Cyt_b6/f_cplx_suIV"/>
</dbReference>
<dbReference type="InterPro" id="IPR048260">
    <property type="entry name" value="Cytochrome_b_C_euk/bac"/>
</dbReference>
<dbReference type="NCBIfam" id="TIGR01156">
    <property type="entry name" value="cytb6_f_IV"/>
    <property type="match status" value="1"/>
</dbReference>
<dbReference type="PANTHER" id="PTHR19271">
    <property type="entry name" value="CYTOCHROME B"/>
    <property type="match status" value="1"/>
</dbReference>
<dbReference type="PANTHER" id="PTHR19271:SF41">
    <property type="entry name" value="CYTOCHROME B_B6 C-TERMINAL REGION PROFILE DOMAIN-CONTAINING PROTEIN"/>
    <property type="match status" value="1"/>
</dbReference>
<dbReference type="Pfam" id="PF00032">
    <property type="entry name" value="Cytochrom_B_C"/>
    <property type="match status" value="1"/>
</dbReference>
<dbReference type="PIRSF" id="PIRSF000033">
    <property type="entry name" value="B6f_17K"/>
    <property type="match status" value="1"/>
</dbReference>
<dbReference type="SUPFAM" id="SSF81648">
    <property type="entry name" value="a domain/subunit of cytochrome bc1 complex (Ubiquinol-cytochrome c reductase)"/>
    <property type="match status" value="1"/>
</dbReference>
<dbReference type="PROSITE" id="PS51003">
    <property type="entry name" value="CYTB_CTER"/>
    <property type="match status" value="1"/>
</dbReference>
<feature type="chain" id="PRO_0000061843" description="Cytochrome b6-f complex subunit 4">
    <location>
        <begin position="1"/>
        <end position="160"/>
    </location>
</feature>
<feature type="transmembrane region" description="Helical" evidence="2">
    <location>
        <begin position="36"/>
        <end position="56"/>
    </location>
</feature>
<feature type="transmembrane region" description="Helical" evidence="2">
    <location>
        <begin position="95"/>
        <end position="115"/>
    </location>
</feature>
<feature type="transmembrane region" description="Helical" evidence="2">
    <location>
        <begin position="131"/>
        <end position="151"/>
    </location>
</feature>
<protein>
    <recommendedName>
        <fullName evidence="2">Cytochrome b6-f complex subunit 4</fullName>
    </recommendedName>
    <alternativeName>
        <fullName evidence="2">17 kDa polypeptide</fullName>
    </alternativeName>
</protein>
<gene>
    <name evidence="2" type="primary">petD</name>
</gene>
<geneLocation type="chloroplast"/>
<accession>Q70XX7</accession>
<name>PETD_AMBTC</name>